<reference key="1">
    <citation type="submission" date="2006-08" db="EMBL/GenBank/DDBJ databases">
        <title>Complete sequence of Maricaulis maris MCS10.</title>
        <authorList>
            <consortium name="US DOE Joint Genome Institute"/>
            <person name="Copeland A."/>
            <person name="Lucas S."/>
            <person name="Lapidus A."/>
            <person name="Barry K."/>
            <person name="Detter J.C."/>
            <person name="Glavina del Rio T."/>
            <person name="Hammon N."/>
            <person name="Israni S."/>
            <person name="Dalin E."/>
            <person name="Tice H."/>
            <person name="Pitluck S."/>
            <person name="Saunders E."/>
            <person name="Brettin T."/>
            <person name="Bruce D."/>
            <person name="Han C."/>
            <person name="Tapia R."/>
            <person name="Gilna P."/>
            <person name="Schmutz J."/>
            <person name="Larimer F."/>
            <person name="Land M."/>
            <person name="Hauser L."/>
            <person name="Kyrpides N."/>
            <person name="Mikhailova N."/>
            <person name="Viollier P."/>
            <person name="Stephens C."/>
            <person name="Richardson P."/>
        </authorList>
    </citation>
    <scope>NUCLEOTIDE SEQUENCE [LARGE SCALE GENOMIC DNA]</scope>
    <source>
        <strain>MCS10</strain>
    </source>
</reference>
<name>TRMFO_MARMM</name>
<feature type="chain" id="PRO_0000346353" description="Methylenetetrahydrofolate--tRNA-(uracil-5-)-methyltransferase TrmFO">
    <location>
        <begin position="1"/>
        <end position="466"/>
    </location>
</feature>
<feature type="binding site" evidence="1">
    <location>
        <begin position="16"/>
        <end position="21"/>
    </location>
    <ligand>
        <name>FAD</name>
        <dbReference type="ChEBI" id="CHEBI:57692"/>
    </ligand>
</feature>
<accession>Q0ANF3</accession>
<evidence type="ECO:0000255" key="1">
    <source>
        <dbReference type="HAMAP-Rule" id="MF_01037"/>
    </source>
</evidence>
<dbReference type="EC" id="2.1.1.74" evidence="1"/>
<dbReference type="EMBL" id="CP000449">
    <property type="protein sequence ID" value="ABI66184.1"/>
    <property type="molecule type" value="Genomic_DNA"/>
</dbReference>
<dbReference type="SMR" id="Q0ANF3"/>
<dbReference type="STRING" id="394221.Mmar10_1892"/>
<dbReference type="KEGG" id="mmr:Mmar10_1892"/>
<dbReference type="eggNOG" id="COG1206">
    <property type="taxonomic scope" value="Bacteria"/>
</dbReference>
<dbReference type="HOGENOM" id="CLU_033057_1_0_5"/>
<dbReference type="OrthoDB" id="9803114at2"/>
<dbReference type="Proteomes" id="UP000001964">
    <property type="component" value="Chromosome"/>
</dbReference>
<dbReference type="GO" id="GO:0005829">
    <property type="term" value="C:cytosol"/>
    <property type="evidence" value="ECO:0007669"/>
    <property type="project" value="TreeGrafter"/>
</dbReference>
<dbReference type="GO" id="GO:0050660">
    <property type="term" value="F:flavin adenine dinucleotide binding"/>
    <property type="evidence" value="ECO:0007669"/>
    <property type="project" value="UniProtKB-UniRule"/>
</dbReference>
<dbReference type="GO" id="GO:0047151">
    <property type="term" value="F:tRNA (uracil(54)-C5)-methyltransferase activity, 5,10-methylenetetrahydrofolate-dependent"/>
    <property type="evidence" value="ECO:0007669"/>
    <property type="project" value="UniProtKB-UniRule"/>
</dbReference>
<dbReference type="GO" id="GO:0030488">
    <property type="term" value="P:tRNA methylation"/>
    <property type="evidence" value="ECO:0007669"/>
    <property type="project" value="TreeGrafter"/>
</dbReference>
<dbReference type="GO" id="GO:0002098">
    <property type="term" value="P:tRNA wobble uridine modification"/>
    <property type="evidence" value="ECO:0007669"/>
    <property type="project" value="TreeGrafter"/>
</dbReference>
<dbReference type="Gene3D" id="3.50.50.60">
    <property type="entry name" value="FAD/NAD(P)-binding domain"/>
    <property type="match status" value="2"/>
</dbReference>
<dbReference type="HAMAP" id="MF_01037">
    <property type="entry name" value="TrmFO"/>
    <property type="match status" value="1"/>
</dbReference>
<dbReference type="InterPro" id="IPR036188">
    <property type="entry name" value="FAD/NAD-bd_sf"/>
</dbReference>
<dbReference type="InterPro" id="IPR002218">
    <property type="entry name" value="MnmG-rel"/>
</dbReference>
<dbReference type="InterPro" id="IPR020595">
    <property type="entry name" value="MnmG-rel_CS"/>
</dbReference>
<dbReference type="InterPro" id="IPR040131">
    <property type="entry name" value="MnmG_N"/>
</dbReference>
<dbReference type="InterPro" id="IPR004417">
    <property type="entry name" value="TrmFO"/>
</dbReference>
<dbReference type="NCBIfam" id="TIGR00137">
    <property type="entry name" value="gid_trmFO"/>
    <property type="match status" value="1"/>
</dbReference>
<dbReference type="NCBIfam" id="NF003739">
    <property type="entry name" value="PRK05335.1"/>
    <property type="match status" value="1"/>
</dbReference>
<dbReference type="PANTHER" id="PTHR11806">
    <property type="entry name" value="GLUCOSE INHIBITED DIVISION PROTEIN A"/>
    <property type="match status" value="1"/>
</dbReference>
<dbReference type="PANTHER" id="PTHR11806:SF2">
    <property type="entry name" value="METHYLENETETRAHYDROFOLATE--TRNA-(URACIL-5-)-METHYLTRANSFERASE TRMFO"/>
    <property type="match status" value="1"/>
</dbReference>
<dbReference type="Pfam" id="PF01134">
    <property type="entry name" value="GIDA"/>
    <property type="match status" value="1"/>
</dbReference>
<dbReference type="SUPFAM" id="SSF51905">
    <property type="entry name" value="FAD/NAD(P)-binding domain"/>
    <property type="match status" value="1"/>
</dbReference>
<dbReference type="PROSITE" id="PS01281">
    <property type="entry name" value="GIDA_2"/>
    <property type="match status" value="1"/>
</dbReference>
<organism>
    <name type="scientific">Maricaulis maris (strain MCS10)</name>
    <name type="common">Caulobacter maris</name>
    <dbReference type="NCBI Taxonomy" id="394221"/>
    <lineage>
        <taxon>Bacteria</taxon>
        <taxon>Pseudomonadati</taxon>
        <taxon>Pseudomonadota</taxon>
        <taxon>Alphaproteobacteria</taxon>
        <taxon>Maricaulales</taxon>
        <taxon>Maricaulaceae</taxon>
        <taxon>Maricaulis</taxon>
    </lineage>
</organism>
<proteinExistence type="inferred from homology"/>
<gene>
    <name evidence="1" type="primary">trmFO</name>
    <name type="ordered locus">Mmar10_1892</name>
</gene>
<keyword id="KW-0963">Cytoplasm</keyword>
<keyword id="KW-0274">FAD</keyword>
<keyword id="KW-0285">Flavoprotein</keyword>
<keyword id="KW-0489">Methyltransferase</keyword>
<keyword id="KW-0520">NAD</keyword>
<keyword id="KW-0521">NADP</keyword>
<keyword id="KW-1185">Reference proteome</keyword>
<keyword id="KW-0808">Transferase</keyword>
<keyword id="KW-0819">tRNA processing</keyword>
<protein>
    <recommendedName>
        <fullName evidence="1">Methylenetetrahydrofolate--tRNA-(uracil-5-)-methyltransferase TrmFO</fullName>
        <ecNumber evidence="1">2.1.1.74</ecNumber>
    </recommendedName>
    <alternativeName>
        <fullName evidence="1">Folate-dependent tRNA (uracil-5-)-methyltransferase</fullName>
    </alternativeName>
    <alternativeName>
        <fullName evidence="1">Folate-dependent tRNA(M-5-U54)-methyltransferase</fullName>
    </alternativeName>
</protein>
<comment type="function">
    <text evidence="1">Catalyzes the folate-dependent formation of 5-methyl-uridine at position 54 (M-5-U54) in all tRNAs.</text>
</comment>
<comment type="catalytic activity">
    <reaction evidence="1">
        <text>uridine(54) in tRNA + (6R)-5,10-methylene-5,6,7,8-tetrahydrofolate + NADH + H(+) = 5-methyluridine(54) in tRNA + (6S)-5,6,7,8-tetrahydrofolate + NAD(+)</text>
        <dbReference type="Rhea" id="RHEA:16873"/>
        <dbReference type="Rhea" id="RHEA-COMP:10167"/>
        <dbReference type="Rhea" id="RHEA-COMP:10193"/>
        <dbReference type="ChEBI" id="CHEBI:15378"/>
        <dbReference type="ChEBI" id="CHEBI:15636"/>
        <dbReference type="ChEBI" id="CHEBI:57453"/>
        <dbReference type="ChEBI" id="CHEBI:57540"/>
        <dbReference type="ChEBI" id="CHEBI:57945"/>
        <dbReference type="ChEBI" id="CHEBI:65315"/>
        <dbReference type="ChEBI" id="CHEBI:74447"/>
        <dbReference type="EC" id="2.1.1.74"/>
    </reaction>
</comment>
<comment type="catalytic activity">
    <reaction evidence="1">
        <text>uridine(54) in tRNA + (6R)-5,10-methylene-5,6,7,8-tetrahydrofolate + NADPH + H(+) = 5-methyluridine(54) in tRNA + (6S)-5,6,7,8-tetrahydrofolate + NADP(+)</text>
        <dbReference type="Rhea" id="RHEA:62372"/>
        <dbReference type="Rhea" id="RHEA-COMP:10167"/>
        <dbReference type="Rhea" id="RHEA-COMP:10193"/>
        <dbReference type="ChEBI" id="CHEBI:15378"/>
        <dbReference type="ChEBI" id="CHEBI:15636"/>
        <dbReference type="ChEBI" id="CHEBI:57453"/>
        <dbReference type="ChEBI" id="CHEBI:57783"/>
        <dbReference type="ChEBI" id="CHEBI:58349"/>
        <dbReference type="ChEBI" id="CHEBI:65315"/>
        <dbReference type="ChEBI" id="CHEBI:74447"/>
        <dbReference type="EC" id="2.1.1.74"/>
    </reaction>
</comment>
<comment type="cofactor">
    <cofactor evidence="1">
        <name>FAD</name>
        <dbReference type="ChEBI" id="CHEBI:57692"/>
    </cofactor>
</comment>
<comment type="subcellular location">
    <subcellularLocation>
        <location evidence="1">Cytoplasm</location>
    </subcellularLocation>
</comment>
<comment type="similarity">
    <text evidence="1">Belongs to the MnmG family. TrmFO subfamily.</text>
</comment>
<sequence>MPRMTDQAMKPIHVIGGGMAGSEATWQLVSQGVPVILHEMRGVKGTDAHHTDGLAELVCSNSFRSDDHRTNAVGLLHEEMRRLDSIILRQGDAARLPAGGALAVDRDVFSQAVTKELSEHPLVTISREEIPALPPEDWDSVIIATGPLTSESLSEAILKETGEGELAFFDAIAPVVYRDSVNTEKAWFQSRYDKGDTDAERKAYLNCPMDRDQYEAFIDALIAAEKTEFKEWEANTPYFDGCLPIEVMAERGRETLRHGPMKPVGLTNPHNPTVKPWAIVQLRQDNALGTLFNLVGFQTKMKYGAQGEVLRMIPGLEEARFARLGGIHRNTFLNSPKLLDAQLRLKSQPRLRFAGQLIGVEGYVESAAMGLLAGRYAAAERLGASLTPPPATTALGALIGHVTGGHLISGKGSFQPMNVNFGLFPPIEQPTVDADGNRIKGKAKTPARKAAMSARALSDLADWQAG</sequence>